<accession>Q08863</accession>
<proteinExistence type="evidence at protein level"/>
<feature type="chain" id="PRO_0000421783" description="Glutathione S-transferase alpha I">
    <location>
        <begin position="1"/>
        <end position="223"/>
    </location>
</feature>
<feature type="initiator methionine" description="Removed; alternate" evidence="3">
    <location>
        <position position="1"/>
    </location>
</feature>
<feature type="chain" id="PRO_0000185798" description="Glutathione S-transferase alpha I, N-terminally processed">
    <location>
        <begin position="2"/>
        <end position="223"/>
    </location>
</feature>
<feature type="domain" description="GST N-terminal">
    <location>
        <begin position="3"/>
        <end position="83"/>
    </location>
</feature>
<feature type="domain" description="GST C-terminal">
    <location>
        <begin position="85"/>
        <end position="208"/>
    </location>
</feature>
<feature type="binding site" evidence="2">
    <location>
        <position position="9"/>
    </location>
    <ligand>
        <name>glutathione</name>
        <dbReference type="ChEBI" id="CHEBI:57925"/>
    </ligand>
</feature>
<feature type="binding site" evidence="1">
    <location>
        <position position="45"/>
    </location>
    <ligand>
        <name>glutathione</name>
        <dbReference type="ChEBI" id="CHEBI:57925"/>
    </ligand>
</feature>
<feature type="binding site" evidence="4">
    <location>
        <begin position="54"/>
        <end position="55"/>
    </location>
    <ligand>
        <name>glutathione</name>
        <dbReference type="ChEBI" id="CHEBI:57925"/>
    </ligand>
</feature>
<feature type="binding site" evidence="2">
    <location>
        <begin position="67"/>
        <end position="68"/>
    </location>
    <ligand>
        <name>glutathione</name>
        <dbReference type="ChEBI" id="CHEBI:57925"/>
    </ligand>
</feature>
<feature type="modified residue" description="N-acetylmethionine" evidence="5">
    <location>
        <position position="1"/>
    </location>
</feature>
<feature type="modified residue" description="N-acetylalanine; in Glutathione S-transferase alpha I, N-terminally processed" evidence="3">
    <location>
        <position position="2"/>
    </location>
</feature>
<feature type="modified residue" description="N6-succinyllysine" evidence="3">
    <location>
        <position position="4"/>
    </location>
</feature>
<keyword id="KW-0007">Acetylation</keyword>
<keyword id="KW-0963">Cytoplasm</keyword>
<keyword id="KW-0903">Direct protein sequencing</keyword>
<keyword id="KW-1185">Reference proteome</keyword>
<keyword id="KW-0808">Transferase</keyword>
<comment type="function">
    <text evidence="1">Glutathione S-transferase that catalyzes the nucleophilic attack of the sulfur atom of glutathione on the electrophilic groups of a wide range of exogenous and endogenous compounds. Involved in the formation of glutathione conjugates of both prostaglandin A2 (PGA2) and prostaglandin J2 (PGJ2). It also catalyzes the isomerization of D5-androstene-3,17-dione (AD) into D4-androstene-3,17-dione and may therefore play an important role in hormone biosynthesis. Through its glutathione-dependent peroxidase activity toward the fatty acid hydroperoxide (13S)-hydroperoxy-(9Z,11E)-octadecadienoate/13-HPODE it is also involved in the metabolism of oxidized linoleic acid.</text>
</comment>
<comment type="catalytic activity">
    <reaction evidence="1">
        <text>RX + glutathione = an S-substituted glutathione + a halide anion + H(+)</text>
        <dbReference type="Rhea" id="RHEA:16437"/>
        <dbReference type="ChEBI" id="CHEBI:15378"/>
        <dbReference type="ChEBI" id="CHEBI:16042"/>
        <dbReference type="ChEBI" id="CHEBI:17792"/>
        <dbReference type="ChEBI" id="CHEBI:57925"/>
        <dbReference type="ChEBI" id="CHEBI:90779"/>
        <dbReference type="EC" id="2.5.1.18"/>
    </reaction>
    <physiologicalReaction direction="left-to-right" evidence="1">
        <dbReference type="Rhea" id="RHEA:16438"/>
    </physiologicalReaction>
</comment>
<comment type="catalytic activity">
    <reaction evidence="1">
        <text>prostaglandin A2 + glutathione = prostaglandin A2-S-(R)-glutathione</text>
        <dbReference type="Rhea" id="RHEA:50796"/>
        <dbReference type="ChEBI" id="CHEBI:57925"/>
        <dbReference type="ChEBI" id="CHEBI:133370"/>
        <dbReference type="ChEBI" id="CHEBI:133768"/>
    </reaction>
    <physiologicalReaction direction="left-to-right" evidence="1">
        <dbReference type="Rhea" id="RHEA:50797"/>
    </physiologicalReaction>
</comment>
<comment type="catalytic activity">
    <reaction evidence="1">
        <text>prostaglandin J2 + glutathione = prostaglandin J2-S-(R)-glutathione</text>
        <dbReference type="Rhea" id="RHEA:50804"/>
        <dbReference type="ChEBI" id="CHEBI:57925"/>
        <dbReference type="ChEBI" id="CHEBI:133396"/>
        <dbReference type="ChEBI" id="CHEBI:133771"/>
    </reaction>
    <physiologicalReaction direction="left-to-right" evidence="1">
        <dbReference type="Rhea" id="RHEA:50805"/>
    </physiologicalReaction>
</comment>
<comment type="catalytic activity">
    <reaction evidence="1">
        <text>(13S)-hydroperoxy-(9Z,11E)-octadecadienoate + 2 glutathione = (13S)-hydroxy-(9Z,11E)-octadecadienoate + glutathione disulfide + H2O</text>
        <dbReference type="Rhea" id="RHEA:48888"/>
        <dbReference type="ChEBI" id="CHEBI:15377"/>
        <dbReference type="ChEBI" id="CHEBI:57466"/>
        <dbReference type="ChEBI" id="CHEBI:57925"/>
        <dbReference type="ChEBI" id="CHEBI:58297"/>
        <dbReference type="ChEBI" id="CHEBI:90850"/>
    </reaction>
    <physiologicalReaction direction="left-to-right" evidence="1">
        <dbReference type="Rhea" id="RHEA:48889"/>
    </physiologicalReaction>
</comment>
<comment type="catalytic activity">
    <reaction evidence="1">
        <text>androst-5-ene-3,17-dione = androst-4-ene-3,17-dione</text>
        <dbReference type="Rhea" id="RHEA:43936"/>
        <dbReference type="ChEBI" id="CHEBI:16422"/>
        <dbReference type="ChEBI" id="CHEBI:83865"/>
    </reaction>
    <physiologicalReaction direction="left-to-right" evidence="1">
        <dbReference type="Rhea" id="RHEA:43937"/>
    </physiologicalReaction>
</comment>
<comment type="subunit">
    <text evidence="1">Homodimer or heterodimer of GSTA1 and GSTA2.</text>
</comment>
<comment type="subcellular location">
    <subcellularLocation>
        <location>Cytoplasm</location>
    </subcellularLocation>
</comment>
<comment type="tissue specificity">
    <text>Liver and lung.</text>
</comment>
<comment type="similarity">
    <text evidence="6">Belongs to the GST superfamily. Alpha family.</text>
</comment>
<sequence length="223" mass="25691">MARKPLLHYFNGRGRMESIRWLLAAAGEEFDEKFMETAEDLDKLRNDGSLMYQQVPMVEIDGMKLVQTRAILNYVANKHNLYGKDMKERALIDMYTEGVADLYELVLLLPLCPPEQKDAKVDFIKEKIRTRYFPAFEKVLKSHGQDYLVGNRLSKADILLVELLYNVEELDPSAIASFPLLKALKTRISSLPTVKKFLQPGSQRKPPMDEKNLEKAKKIFKIP</sequence>
<reference key="1">
    <citation type="journal article" date="1991" name="J. Biol. Chem.">
        <title>The major alpha-class glutathione S-transferases of rabbit lung and liver. Primary sequences, expression, and regulation.</title>
        <authorList>
            <person name="Gardlik S.J."/>
            <person name="Gasser R."/>
            <person name="Philpot R.M."/>
            <person name="Serabjit-Singh C.J."/>
        </authorList>
    </citation>
    <scope>NUCLEOTIDE SEQUENCE [MRNA]</scope>
    <scope>PARTIAL PROTEIN SEQUENCE</scope>
    <source>
        <strain>New Zealand white</strain>
        <tissue>Lung</tissue>
    </source>
</reference>
<protein>
    <recommendedName>
        <fullName>Glutathione S-transferase alpha I</fullName>
        <ecNumber evidence="1">2.5.1.18</ecNumber>
    </recommendedName>
    <alternativeName>
        <fullName>GST class-alpha</fullName>
    </alternativeName>
    <alternativeName>
        <fullName>GSTA1-1</fullName>
    </alternativeName>
    <component>
        <recommendedName>
            <fullName>Glutathione S-transferase alpha I, N-terminally processed</fullName>
        </recommendedName>
    </component>
</protein>
<name>GSTA1_RABIT</name>
<dbReference type="EC" id="2.5.1.18" evidence="1"/>
<dbReference type="EMBL" id="M74528">
    <property type="protein sequence ID" value="AAA31259.1"/>
    <property type="molecule type" value="mRNA"/>
</dbReference>
<dbReference type="PIR" id="A41031">
    <property type="entry name" value="A41031"/>
</dbReference>
<dbReference type="RefSeq" id="NP_001164568.1">
    <property type="nucleotide sequence ID" value="NM_001171097.1"/>
</dbReference>
<dbReference type="SMR" id="Q08863"/>
<dbReference type="STRING" id="9986.ENSOCUP00000049911"/>
<dbReference type="PaxDb" id="9986-ENSOCUP00000003188"/>
<dbReference type="GeneID" id="100328910"/>
<dbReference type="KEGG" id="ocu:100328910"/>
<dbReference type="eggNOG" id="KOG1695">
    <property type="taxonomic scope" value="Eukaryota"/>
</dbReference>
<dbReference type="HOGENOM" id="CLU_039475_4_0_1"/>
<dbReference type="InParanoid" id="Q08863"/>
<dbReference type="OMA" id="LVELFYY"/>
<dbReference type="OrthoDB" id="414243at2759"/>
<dbReference type="Proteomes" id="UP000001811">
    <property type="component" value="Unplaced"/>
</dbReference>
<dbReference type="ExpressionAtlas" id="Q08863">
    <property type="expression patterns" value="baseline"/>
</dbReference>
<dbReference type="GO" id="GO:0005829">
    <property type="term" value="C:cytosol"/>
    <property type="evidence" value="ECO:0007669"/>
    <property type="project" value="TreeGrafter"/>
</dbReference>
<dbReference type="GO" id="GO:0070062">
    <property type="term" value="C:extracellular exosome"/>
    <property type="evidence" value="ECO:0007669"/>
    <property type="project" value="TreeGrafter"/>
</dbReference>
<dbReference type="GO" id="GO:0004364">
    <property type="term" value="F:glutathione transferase activity"/>
    <property type="evidence" value="ECO:0000250"/>
    <property type="project" value="UniProtKB"/>
</dbReference>
<dbReference type="GO" id="GO:0006749">
    <property type="term" value="P:glutathione metabolic process"/>
    <property type="evidence" value="ECO:0000250"/>
    <property type="project" value="UniProtKB"/>
</dbReference>
<dbReference type="GO" id="GO:0006805">
    <property type="term" value="P:xenobiotic metabolic process"/>
    <property type="evidence" value="ECO:0007669"/>
    <property type="project" value="TreeGrafter"/>
</dbReference>
<dbReference type="FunFam" id="1.20.1050.10:FF:000005">
    <property type="entry name" value="Glutathione S-transferase A1"/>
    <property type="match status" value="1"/>
</dbReference>
<dbReference type="Gene3D" id="1.20.1050.10">
    <property type="match status" value="1"/>
</dbReference>
<dbReference type="Gene3D" id="3.40.30.10">
    <property type="entry name" value="Glutaredoxin"/>
    <property type="match status" value="1"/>
</dbReference>
<dbReference type="InterPro" id="IPR010987">
    <property type="entry name" value="Glutathione-S-Trfase_C-like"/>
</dbReference>
<dbReference type="InterPro" id="IPR036282">
    <property type="entry name" value="Glutathione-S-Trfase_C_sf"/>
</dbReference>
<dbReference type="InterPro" id="IPR004045">
    <property type="entry name" value="Glutathione_S-Trfase_N"/>
</dbReference>
<dbReference type="InterPro" id="IPR003080">
    <property type="entry name" value="GST_alpha"/>
</dbReference>
<dbReference type="InterPro" id="IPR004046">
    <property type="entry name" value="GST_C"/>
</dbReference>
<dbReference type="InterPro" id="IPR050213">
    <property type="entry name" value="GST_superfamily"/>
</dbReference>
<dbReference type="InterPro" id="IPR036249">
    <property type="entry name" value="Thioredoxin-like_sf"/>
</dbReference>
<dbReference type="PANTHER" id="PTHR11571">
    <property type="entry name" value="GLUTATHIONE S-TRANSFERASE"/>
    <property type="match status" value="1"/>
</dbReference>
<dbReference type="PANTHER" id="PTHR11571:SF107">
    <property type="entry name" value="GLUTATHIONE S-TRANSFERASE A1"/>
    <property type="match status" value="1"/>
</dbReference>
<dbReference type="Pfam" id="PF00043">
    <property type="entry name" value="GST_C"/>
    <property type="match status" value="1"/>
</dbReference>
<dbReference type="Pfam" id="PF02798">
    <property type="entry name" value="GST_N"/>
    <property type="match status" value="1"/>
</dbReference>
<dbReference type="PRINTS" id="PR01266">
    <property type="entry name" value="GSTRNSFRASEA"/>
</dbReference>
<dbReference type="SFLD" id="SFLDG01205">
    <property type="entry name" value="AMPS.1"/>
    <property type="match status" value="1"/>
</dbReference>
<dbReference type="SFLD" id="SFLDG00363">
    <property type="entry name" value="AMPS_(cytGST):_Alpha-__Mu-__Pi"/>
    <property type="match status" value="1"/>
</dbReference>
<dbReference type="SUPFAM" id="SSF47616">
    <property type="entry name" value="GST C-terminal domain-like"/>
    <property type="match status" value="1"/>
</dbReference>
<dbReference type="SUPFAM" id="SSF52833">
    <property type="entry name" value="Thioredoxin-like"/>
    <property type="match status" value="1"/>
</dbReference>
<dbReference type="PROSITE" id="PS50405">
    <property type="entry name" value="GST_CTER"/>
    <property type="match status" value="1"/>
</dbReference>
<dbReference type="PROSITE" id="PS50404">
    <property type="entry name" value="GST_NTER"/>
    <property type="match status" value="1"/>
</dbReference>
<evidence type="ECO:0000250" key="1">
    <source>
        <dbReference type="UniProtKB" id="P08263"/>
    </source>
</evidence>
<evidence type="ECO:0000250" key="2">
    <source>
        <dbReference type="UniProtKB" id="P13745"/>
    </source>
</evidence>
<evidence type="ECO:0000250" key="3">
    <source>
        <dbReference type="UniProtKB" id="P30115"/>
    </source>
</evidence>
<evidence type="ECO:0000250" key="4">
    <source>
        <dbReference type="UniProtKB" id="P30711"/>
    </source>
</evidence>
<evidence type="ECO:0000250" key="5">
    <source>
        <dbReference type="UniProtKB" id="P80894"/>
    </source>
</evidence>
<evidence type="ECO:0000305" key="6"/>
<organism>
    <name type="scientific">Oryctolagus cuniculus</name>
    <name type="common">Rabbit</name>
    <dbReference type="NCBI Taxonomy" id="9986"/>
    <lineage>
        <taxon>Eukaryota</taxon>
        <taxon>Metazoa</taxon>
        <taxon>Chordata</taxon>
        <taxon>Craniata</taxon>
        <taxon>Vertebrata</taxon>
        <taxon>Euteleostomi</taxon>
        <taxon>Mammalia</taxon>
        <taxon>Eutheria</taxon>
        <taxon>Euarchontoglires</taxon>
        <taxon>Glires</taxon>
        <taxon>Lagomorpha</taxon>
        <taxon>Leporidae</taxon>
        <taxon>Oryctolagus</taxon>
    </lineage>
</organism>